<organism>
    <name type="scientific">Homo sapiens</name>
    <name type="common">Human</name>
    <dbReference type="NCBI Taxonomy" id="9606"/>
    <lineage>
        <taxon>Eukaryota</taxon>
        <taxon>Metazoa</taxon>
        <taxon>Chordata</taxon>
        <taxon>Craniata</taxon>
        <taxon>Vertebrata</taxon>
        <taxon>Euteleostomi</taxon>
        <taxon>Mammalia</taxon>
        <taxon>Eutheria</taxon>
        <taxon>Euarchontoglires</taxon>
        <taxon>Primates</taxon>
        <taxon>Haplorrhini</taxon>
        <taxon>Catarrhini</taxon>
        <taxon>Hominidae</taxon>
        <taxon>Homo</taxon>
    </lineage>
</organism>
<reference key="1">
    <citation type="journal article" date="2004" name="Nat. Genet.">
        <title>Complete sequencing and characterization of 21,243 full-length human cDNAs.</title>
        <authorList>
            <person name="Ota T."/>
            <person name="Suzuki Y."/>
            <person name="Nishikawa T."/>
            <person name="Otsuki T."/>
            <person name="Sugiyama T."/>
            <person name="Irie R."/>
            <person name="Wakamatsu A."/>
            <person name="Hayashi K."/>
            <person name="Sato H."/>
            <person name="Nagai K."/>
            <person name="Kimura K."/>
            <person name="Makita H."/>
            <person name="Sekine M."/>
            <person name="Obayashi M."/>
            <person name="Nishi T."/>
            <person name="Shibahara T."/>
            <person name="Tanaka T."/>
            <person name="Ishii S."/>
            <person name="Yamamoto J."/>
            <person name="Saito K."/>
            <person name="Kawai Y."/>
            <person name="Isono Y."/>
            <person name="Nakamura Y."/>
            <person name="Nagahari K."/>
            <person name="Murakami K."/>
            <person name="Yasuda T."/>
            <person name="Iwayanagi T."/>
            <person name="Wagatsuma M."/>
            <person name="Shiratori A."/>
            <person name="Sudo H."/>
            <person name="Hosoiri T."/>
            <person name="Kaku Y."/>
            <person name="Kodaira H."/>
            <person name="Kondo H."/>
            <person name="Sugawara M."/>
            <person name="Takahashi M."/>
            <person name="Kanda K."/>
            <person name="Yokoi T."/>
            <person name="Furuya T."/>
            <person name="Kikkawa E."/>
            <person name="Omura Y."/>
            <person name="Abe K."/>
            <person name="Kamihara K."/>
            <person name="Katsuta N."/>
            <person name="Sato K."/>
            <person name="Tanikawa M."/>
            <person name="Yamazaki M."/>
            <person name="Ninomiya K."/>
            <person name="Ishibashi T."/>
            <person name="Yamashita H."/>
            <person name="Murakawa K."/>
            <person name="Fujimori K."/>
            <person name="Tanai H."/>
            <person name="Kimata M."/>
            <person name="Watanabe M."/>
            <person name="Hiraoka S."/>
            <person name="Chiba Y."/>
            <person name="Ishida S."/>
            <person name="Ono Y."/>
            <person name="Takiguchi S."/>
            <person name="Watanabe S."/>
            <person name="Yosida M."/>
            <person name="Hotuta T."/>
            <person name="Kusano J."/>
            <person name="Kanehori K."/>
            <person name="Takahashi-Fujii A."/>
            <person name="Hara H."/>
            <person name="Tanase T.-O."/>
            <person name="Nomura Y."/>
            <person name="Togiya S."/>
            <person name="Komai F."/>
            <person name="Hara R."/>
            <person name="Takeuchi K."/>
            <person name="Arita M."/>
            <person name="Imose N."/>
            <person name="Musashino K."/>
            <person name="Yuuki H."/>
            <person name="Oshima A."/>
            <person name="Sasaki N."/>
            <person name="Aotsuka S."/>
            <person name="Yoshikawa Y."/>
            <person name="Matsunawa H."/>
            <person name="Ichihara T."/>
            <person name="Shiohata N."/>
            <person name="Sano S."/>
            <person name="Moriya S."/>
            <person name="Momiyama H."/>
            <person name="Satoh N."/>
            <person name="Takami S."/>
            <person name="Terashima Y."/>
            <person name="Suzuki O."/>
            <person name="Nakagawa S."/>
            <person name="Senoh A."/>
            <person name="Mizoguchi H."/>
            <person name="Goto Y."/>
            <person name="Shimizu F."/>
            <person name="Wakebe H."/>
            <person name="Hishigaki H."/>
            <person name="Watanabe T."/>
            <person name="Sugiyama A."/>
            <person name="Takemoto M."/>
            <person name="Kawakami B."/>
            <person name="Yamazaki M."/>
            <person name="Watanabe K."/>
            <person name="Kumagai A."/>
            <person name="Itakura S."/>
            <person name="Fukuzumi Y."/>
            <person name="Fujimori Y."/>
            <person name="Komiyama M."/>
            <person name="Tashiro H."/>
            <person name="Tanigami A."/>
            <person name="Fujiwara T."/>
            <person name="Ono T."/>
            <person name="Yamada K."/>
            <person name="Fujii Y."/>
            <person name="Ozaki K."/>
            <person name="Hirao M."/>
            <person name="Ohmori Y."/>
            <person name="Kawabata A."/>
            <person name="Hikiji T."/>
            <person name="Kobatake N."/>
            <person name="Inagaki H."/>
            <person name="Ikema Y."/>
            <person name="Okamoto S."/>
            <person name="Okitani R."/>
            <person name="Kawakami T."/>
            <person name="Noguchi S."/>
            <person name="Itoh T."/>
            <person name="Shigeta K."/>
            <person name="Senba T."/>
            <person name="Matsumura K."/>
            <person name="Nakajima Y."/>
            <person name="Mizuno T."/>
            <person name="Morinaga M."/>
            <person name="Sasaki M."/>
            <person name="Togashi T."/>
            <person name="Oyama M."/>
            <person name="Hata H."/>
            <person name="Watanabe M."/>
            <person name="Komatsu T."/>
            <person name="Mizushima-Sugano J."/>
            <person name="Satoh T."/>
            <person name="Shirai Y."/>
            <person name="Takahashi Y."/>
            <person name="Nakagawa K."/>
            <person name="Okumura K."/>
            <person name="Nagase T."/>
            <person name="Nomura N."/>
            <person name="Kikuchi H."/>
            <person name="Masuho Y."/>
            <person name="Yamashita R."/>
            <person name="Nakai K."/>
            <person name="Yada T."/>
            <person name="Nakamura Y."/>
            <person name="Ohara O."/>
            <person name="Isogai T."/>
            <person name="Sugano S."/>
        </authorList>
    </citation>
    <scope>NUCLEOTIDE SEQUENCE [LARGE SCALE MRNA] (ISOFORM 1)</scope>
    <source>
        <tissue>Testis</tissue>
    </source>
</reference>
<reference key="2">
    <citation type="journal article" date="2004" name="Genome Res.">
        <title>The status, quality, and expansion of the NIH full-length cDNA project: the Mammalian Gene Collection (MGC).</title>
        <authorList>
            <consortium name="The MGC Project Team"/>
        </authorList>
    </citation>
    <scope>NUCLEOTIDE SEQUENCE [LARGE SCALE MRNA] (ISOFORMS 1 AND 2)</scope>
    <scope>VARIANT THR-382</scope>
    <source>
        <tissue>Brain</tissue>
        <tissue>Testis</tissue>
    </source>
</reference>
<reference key="3">
    <citation type="journal article" date="2009" name="Chem. Biol.">
        <title>Docking motif-guided mapping of the interactome of protein phosphatase-1.</title>
        <authorList>
            <person name="Hendrickx A."/>
            <person name="Beullens M."/>
            <person name="Ceulemans H."/>
            <person name="Den Abt T."/>
            <person name="Van Eynde A."/>
            <person name="Nicolaescu E."/>
            <person name="Lesage B."/>
            <person name="Bollen M."/>
        </authorList>
    </citation>
    <scope>INTERACTION WITH PPP1CA</scope>
</reference>
<feature type="chain" id="PRO_0000274377" description="Stabilizer of axonemal microtubules 4">
    <location>
        <begin position="1"/>
        <end position="425"/>
    </location>
</feature>
<feature type="region of interest" description="Disordered" evidence="3">
    <location>
        <begin position="93"/>
        <end position="126"/>
    </location>
</feature>
<feature type="region of interest" description="Disordered" evidence="3">
    <location>
        <begin position="203"/>
        <end position="225"/>
    </location>
</feature>
<feature type="region of interest" description="Disordered" evidence="3">
    <location>
        <begin position="316"/>
        <end position="335"/>
    </location>
</feature>
<feature type="compositionally biased region" description="Polar residues" evidence="3">
    <location>
        <begin position="207"/>
        <end position="222"/>
    </location>
</feature>
<feature type="splice variant" id="VSP_022731" description="In isoform 2." evidence="6">
    <location>
        <begin position="230"/>
        <end position="249"/>
    </location>
</feature>
<feature type="sequence variant" id="VAR_030271" description="In dbSNP:rs11230707.">
    <original>T</original>
    <variation>N</variation>
    <location>
        <position position="238"/>
    </location>
</feature>
<feature type="sequence variant" id="VAR_030272" description="In dbSNP:rs12787061." evidence="4">
    <original>S</original>
    <variation>T</variation>
    <location>
        <position position="382"/>
    </location>
</feature>
<feature type="sequence conflict" description="In Ref. 1; BAB71432." evidence="7" ref="1">
    <original>H</original>
    <variation>R</variation>
    <location>
        <position position="155"/>
    </location>
</feature>
<protein>
    <recommendedName>
        <fullName evidence="8">Stabilizer of axonemal microtubules 4</fullName>
    </recommendedName>
    <alternativeName>
        <fullName evidence="7">Protein phosphatase 1 regulatory subunit 32</fullName>
    </alternativeName>
</protein>
<gene>
    <name evidence="8" type="primary">SAXO4</name>
    <name type="synonym">C11orf66</name>
    <name type="synonym">PPP1R32</name>
</gene>
<name>SAXO4_HUMAN</name>
<proteinExistence type="evidence at protein level"/>
<accession>Q7Z5V6</accession>
<accession>Q4G0P4</accession>
<accession>Q96M77</accession>
<evidence type="ECO:0000250" key="1">
    <source>
        <dbReference type="UniProtKB" id="Q148A4"/>
    </source>
</evidence>
<evidence type="ECO:0000250" key="2">
    <source>
        <dbReference type="UniProtKB" id="Q66HR9"/>
    </source>
</evidence>
<evidence type="ECO:0000256" key="3">
    <source>
        <dbReference type="SAM" id="MobiDB-lite"/>
    </source>
</evidence>
<evidence type="ECO:0000269" key="4">
    <source>
    </source>
</evidence>
<evidence type="ECO:0000269" key="5">
    <source>
    </source>
</evidence>
<evidence type="ECO:0000303" key="6">
    <source>
    </source>
</evidence>
<evidence type="ECO:0000305" key="7"/>
<evidence type="ECO:0000312" key="8">
    <source>
        <dbReference type="HGNC" id="HGNC:28869"/>
    </source>
</evidence>
<sequence>MMGKLPLGVVSPYVKMSSGGYTDPLKFYATSYCTAYGREDFKPRVGSHVGTGYKSNFQPVVSCQASLEALDNPARGEQAQDHFQSVASQSYRPLEVPDGKHPLPWSMRQTSSGYGREKPSAGPPTKEVRKVHFDTQEHGPQAITGLEPREVPLLHQQQGQDPLERENFRHGPRFMTSEYNSKYLRDPLDQPDFLQKKSIGAKEGSGFTKQSHQSPIVFQPPSQALPGDPALLPGQSVTKSDFLPKTHLHGDEFLPVLARGSKRETAFSRGNERILNPRVPPPCPEPSSVSHQQFQPLHRMQQTNVALLGRETVGKKEPTGFSLNNPMYVRSPCDPDRDQRYLTTYNQGYFENIPKGLDQEGWTRGGIQPQMPGGYALSQPVSCMEATPNPMESLRHLHPHVGRTLTSADPFYQNTPHSSRCVAHS</sequence>
<dbReference type="EMBL" id="AK057333">
    <property type="protein sequence ID" value="BAB71432.1"/>
    <property type="molecule type" value="mRNA"/>
</dbReference>
<dbReference type="EMBL" id="BC043246">
    <property type="protein sequence ID" value="AAH43246.1"/>
    <property type="molecule type" value="mRNA"/>
</dbReference>
<dbReference type="EMBL" id="BC053995">
    <property type="protein sequence ID" value="AAH53995.1"/>
    <property type="molecule type" value="mRNA"/>
</dbReference>
<dbReference type="CCDS" id="CCDS53641.1">
    <molecule id="Q7Z5V6-2"/>
</dbReference>
<dbReference type="CCDS" id="CCDS8008.1">
    <molecule id="Q7Z5V6-1"/>
</dbReference>
<dbReference type="RefSeq" id="NP_001164224.1">
    <molecule id="Q7Z5V6-2"/>
    <property type="nucleotide sequence ID" value="NM_001170753.2"/>
</dbReference>
<dbReference type="RefSeq" id="NP_659454.2">
    <molecule id="Q7Z5V6-1"/>
    <property type="nucleotide sequence ID" value="NM_145017.3"/>
</dbReference>
<dbReference type="SMR" id="Q7Z5V6"/>
<dbReference type="BioGRID" id="128618">
    <property type="interactions" value="96"/>
</dbReference>
<dbReference type="FunCoup" id="Q7Z5V6">
    <property type="interactions" value="65"/>
</dbReference>
<dbReference type="IntAct" id="Q7Z5V6">
    <property type="interactions" value="75"/>
</dbReference>
<dbReference type="MINT" id="Q7Z5V6"/>
<dbReference type="STRING" id="9606.ENSP00000344140"/>
<dbReference type="iPTMnet" id="Q7Z5V6"/>
<dbReference type="PhosphoSitePlus" id="Q7Z5V6"/>
<dbReference type="BioMuta" id="PPP1R32"/>
<dbReference type="DMDM" id="74738757"/>
<dbReference type="MassIVE" id="Q7Z5V6"/>
<dbReference type="PaxDb" id="9606-ENSP00000344140"/>
<dbReference type="PeptideAtlas" id="Q7Z5V6"/>
<dbReference type="ProteomicsDB" id="69355">
    <molecule id="Q7Z5V6-1"/>
</dbReference>
<dbReference type="ProteomicsDB" id="69356">
    <molecule id="Q7Z5V6-2"/>
</dbReference>
<dbReference type="Antibodypedia" id="51662">
    <property type="antibodies" value="15 antibodies from 7 providers"/>
</dbReference>
<dbReference type="DNASU" id="220004"/>
<dbReference type="Ensembl" id="ENST00000338608.7">
    <molecule id="Q7Z5V6-1"/>
    <property type="protein sequence ID" value="ENSP00000344140.2"/>
    <property type="gene ID" value="ENSG00000162148.11"/>
</dbReference>
<dbReference type="Ensembl" id="ENST00000432063.6">
    <molecule id="Q7Z5V6-2"/>
    <property type="protein sequence ID" value="ENSP00000391560.2"/>
    <property type="gene ID" value="ENSG00000162148.11"/>
</dbReference>
<dbReference type="GeneID" id="220004"/>
<dbReference type="KEGG" id="hsa:220004"/>
<dbReference type="MANE-Select" id="ENST00000338608.7">
    <property type="protein sequence ID" value="ENSP00000344140.2"/>
    <property type="RefSeq nucleotide sequence ID" value="NM_145017.3"/>
    <property type="RefSeq protein sequence ID" value="NP_659454.2"/>
</dbReference>
<dbReference type="UCSC" id="uc001nru.3">
    <molecule id="Q7Z5V6-1"/>
    <property type="organism name" value="human"/>
</dbReference>
<dbReference type="AGR" id="HGNC:28869"/>
<dbReference type="CTD" id="220004"/>
<dbReference type="GeneCards" id="SAXO4"/>
<dbReference type="HGNC" id="HGNC:28869">
    <property type="gene designation" value="SAXO4"/>
</dbReference>
<dbReference type="HPA" id="ENSG00000162148">
    <property type="expression patterns" value="Tissue enhanced (choroid plexus, testis)"/>
</dbReference>
<dbReference type="MIM" id="619047">
    <property type="type" value="gene"/>
</dbReference>
<dbReference type="neXtProt" id="NX_Q7Z5V6"/>
<dbReference type="OpenTargets" id="ENSG00000162148"/>
<dbReference type="PharmGKB" id="PA144596485"/>
<dbReference type="VEuPathDB" id="HostDB:ENSG00000162148"/>
<dbReference type="eggNOG" id="ENOG502QR8X">
    <property type="taxonomic scope" value="Eukaryota"/>
</dbReference>
<dbReference type="GeneTree" id="ENSGT00390000003127"/>
<dbReference type="HOGENOM" id="CLU_686162_0_0_1"/>
<dbReference type="InParanoid" id="Q7Z5V6"/>
<dbReference type="OMA" id="TTYNQRY"/>
<dbReference type="OrthoDB" id="2228at9604"/>
<dbReference type="PAN-GO" id="Q7Z5V6">
    <property type="GO annotations" value="1 GO annotation based on evolutionary models"/>
</dbReference>
<dbReference type="PhylomeDB" id="Q7Z5V6"/>
<dbReference type="TreeFam" id="TF328734"/>
<dbReference type="PathwayCommons" id="Q7Z5V6"/>
<dbReference type="SignaLink" id="Q7Z5V6"/>
<dbReference type="BioGRID-ORCS" id="220004">
    <property type="hits" value="9 hits in 1147 CRISPR screens"/>
</dbReference>
<dbReference type="ChiTaRS" id="PPP1R32">
    <property type="organism name" value="human"/>
</dbReference>
<dbReference type="GenomeRNAi" id="220004"/>
<dbReference type="Pharos" id="Q7Z5V6">
    <property type="development level" value="Tdark"/>
</dbReference>
<dbReference type="PRO" id="PR:Q7Z5V6"/>
<dbReference type="Proteomes" id="UP000005640">
    <property type="component" value="Chromosome 11"/>
</dbReference>
<dbReference type="RNAct" id="Q7Z5V6">
    <property type="molecule type" value="protein"/>
</dbReference>
<dbReference type="Bgee" id="ENSG00000162148">
    <property type="expression patterns" value="Expressed in right uterine tube and 101 other cell types or tissues"/>
</dbReference>
<dbReference type="ExpressionAtlas" id="Q7Z5V6">
    <property type="expression patterns" value="baseline and differential"/>
</dbReference>
<dbReference type="GO" id="GO:0160111">
    <property type="term" value="C:axonemal A tubule inner sheath"/>
    <property type="evidence" value="ECO:0000250"/>
    <property type="project" value="UniProtKB"/>
</dbReference>
<dbReference type="GO" id="GO:0036064">
    <property type="term" value="C:ciliary basal body"/>
    <property type="evidence" value="ECO:0000314"/>
    <property type="project" value="GO_Central"/>
</dbReference>
<dbReference type="GO" id="GO:0005737">
    <property type="term" value="C:cytoplasm"/>
    <property type="evidence" value="ECO:0000250"/>
    <property type="project" value="UniProtKB"/>
</dbReference>
<dbReference type="GO" id="GO:0036126">
    <property type="term" value="C:sperm flagellum"/>
    <property type="evidence" value="ECO:0000250"/>
    <property type="project" value="UniProtKB"/>
</dbReference>
<dbReference type="GO" id="GO:0019902">
    <property type="term" value="F:phosphatase binding"/>
    <property type="evidence" value="ECO:0000314"/>
    <property type="project" value="UniProtKB"/>
</dbReference>
<dbReference type="GO" id="GO:0030317">
    <property type="term" value="P:flagellated sperm motility"/>
    <property type="evidence" value="ECO:0000250"/>
    <property type="project" value="UniProtKB"/>
</dbReference>
<dbReference type="InterPro" id="IPR031410">
    <property type="entry name" value="SAXO4"/>
</dbReference>
<dbReference type="PANTHER" id="PTHR34349">
    <property type="entry name" value="PROTEIN PHOSPHATASE 1 REGULATORY SUBUNIT 32"/>
    <property type="match status" value="1"/>
</dbReference>
<dbReference type="PANTHER" id="PTHR34349:SF1">
    <property type="entry name" value="PROTEIN PHOSPHATASE 1 REGULATORY SUBUNIT 32"/>
    <property type="match status" value="1"/>
</dbReference>
<dbReference type="Pfam" id="PF15691">
    <property type="entry name" value="PPP1R32"/>
    <property type="match status" value="1"/>
</dbReference>
<comment type="subunit">
    <text evidence="1 5">Microtubule inner protein component of sperm flagellar doublet microtubules (By similarity). Interacts with PPP1CA (PubMed:19389623).</text>
</comment>
<comment type="interaction">
    <interactant intactId="EBI-4311771">
        <id>Q7Z5V6</id>
    </interactant>
    <interactant intactId="EBI-349854">
        <id>P13569</id>
        <label>CFTR</label>
    </interactant>
    <organismsDiffer>false</organismsDiffer>
    <experiments>3</experiments>
</comment>
<comment type="interaction">
    <interactant intactId="EBI-4311771">
        <id>Q7Z5V6</id>
    </interactant>
    <interactant intactId="EBI-357253">
        <id>P62136</id>
        <label>PPP1CA</label>
    </interactant>
    <organismsDiffer>false</organismsDiffer>
    <experiments>3</experiments>
</comment>
<comment type="interaction">
    <interactant intactId="EBI-4311771">
        <id>Q7Z5V6</id>
    </interactant>
    <interactant intactId="EBI-3964623">
        <id>P36873-2</id>
        <label>PPP1CC</label>
    </interactant>
    <organismsDiffer>false</organismsDiffer>
    <experiments>4</experiments>
</comment>
<comment type="interaction">
    <interactant intactId="EBI-12000762">
        <id>Q7Z5V6-2</id>
    </interactant>
    <interactant intactId="EBI-357530">
        <id>Q9ULX6</id>
        <label>AKAP8L</label>
    </interactant>
    <organismsDiffer>false</organismsDiffer>
    <experiments>3</experiments>
</comment>
<comment type="interaction">
    <interactant intactId="EBI-12000762">
        <id>Q7Z5V6-2</id>
    </interactant>
    <interactant intactId="EBI-12078276">
        <id>Q60I27</id>
        <label>ALS2CL</label>
    </interactant>
    <organismsDiffer>false</organismsDiffer>
    <experiments>3</experiments>
</comment>
<comment type="interaction">
    <interactant intactId="EBI-12000762">
        <id>Q7Z5V6-2</id>
    </interactant>
    <interactant intactId="EBI-11954292">
        <id>Q86V38</id>
        <label>ATN1</label>
    </interactant>
    <organismsDiffer>false</organismsDiffer>
    <experiments>3</experiments>
</comment>
<comment type="interaction">
    <interactant intactId="EBI-12000762">
        <id>Q7Z5V6-2</id>
    </interactant>
    <interactant intactId="EBI-1166928">
        <id>Q8N5M1</id>
        <label>ATPAF2</label>
    </interactant>
    <organismsDiffer>false</organismsDiffer>
    <experiments>5</experiments>
</comment>
<comment type="interaction">
    <interactant intactId="EBI-12000762">
        <id>Q7Z5V6-2</id>
    </interactant>
    <interactant intactId="EBI-6958971">
        <id>Q9BPU9</id>
        <label>B9D2</label>
    </interactant>
    <organismsDiffer>false</organismsDiffer>
    <experiments>3</experiments>
</comment>
<comment type="interaction">
    <interactant intactId="EBI-12000762">
        <id>Q7Z5V6-2</id>
    </interactant>
    <interactant intactId="EBI-2949658">
        <id>O95429</id>
        <label>BAG4</label>
    </interactant>
    <organismsDiffer>false</organismsDiffer>
    <experiments>6</experiments>
</comment>
<comment type="interaction">
    <interactant intactId="EBI-12000762">
        <id>Q7Z5V6-2</id>
    </interactant>
    <interactant intactId="EBI-1050106">
        <id>O75934</id>
        <label>BCAS2</label>
    </interactant>
    <organismsDiffer>false</organismsDiffer>
    <experiments>3</experiments>
</comment>
<comment type="interaction">
    <interactant intactId="EBI-12000762">
        <id>Q7Z5V6-2</id>
    </interactant>
    <interactant intactId="EBI-12809220">
        <id>Q5SWW7</id>
        <label>C10orf55</label>
    </interactant>
    <organismsDiffer>false</organismsDiffer>
    <experiments>3</experiments>
</comment>
<comment type="interaction">
    <interactant intactId="EBI-12000762">
        <id>Q7Z5V6-2</id>
    </interactant>
    <interactant intactId="EBI-744545">
        <id>Q8NEC5</id>
        <label>CATSPER1</label>
    </interactant>
    <organismsDiffer>false</organismsDiffer>
    <experiments>3</experiments>
</comment>
<comment type="interaction">
    <interactant intactId="EBI-12000762">
        <id>Q7Z5V6-2</id>
    </interactant>
    <interactant intactId="EBI-10961624">
        <id>Q2TAC2-2</id>
        <label>CCDC57</label>
    </interactant>
    <organismsDiffer>false</organismsDiffer>
    <experiments>3</experiments>
</comment>
<comment type="interaction">
    <interactant intactId="EBI-12000762">
        <id>Q7Z5V6-2</id>
    </interactant>
    <interactant intactId="EBI-3866319">
        <id>Q9Y2V7</id>
        <label>COG6</label>
    </interactant>
    <organismsDiffer>false</organismsDiffer>
    <experiments>3</experiments>
</comment>
<comment type="interaction">
    <interactant intactId="EBI-12000762">
        <id>Q7Z5V6-2</id>
    </interactant>
    <interactant intactId="EBI-1053725">
        <id>P10606</id>
        <label>COX5B</label>
    </interactant>
    <organismsDiffer>false</organismsDiffer>
    <experiments>3</experiments>
</comment>
<comment type="interaction">
    <interactant intactId="EBI-12000762">
        <id>Q7Z5V6-2</id>
    </interactant>
    <interactant intactId="EBI-711360">
        <id>P33240</id>
        <label>CSTF2</label>
    </interactant>
    <organismsDiffer>false</organismsDiffer>
    <experiments>3</experiments>
</comment>
<comment type="interaction">
    <interactant intactId="EBI-12000762">
        <id>Q7Z5V6-2</id>
    </interactant>
    <interactant intactId="EBI-751587">
        <id>Q9GZU7</id>
        <label>CTDSP1</label>
    </interactant>
    <organismsDiffer>false</organismsDiffer>
    <experiments>3</experiments>
</comment>
<comment type="interaction">
    <interactant intactId="EBI-12000762">
        <id>Q7Z5V6-2</id>
    </interactant>
    <interactant intactId="EBI-3867333">
        <id>A8MQ03</id>
        <label>CYSRT1</label>
    </interactant>
    <organismsDiffer>false</organismsDiffer>
    <experiments>3</experiments>
</comment>
<comment type="interaction">
    <interactant intactId="EBI-12000762">
        <id>Q7Z5V6-2</id>
    </interactant>
    <interactant intactId="EBI-740376">
        <id>Q86UW9</id>
        <label>DTX2</label>
    </interactant>
    <organismsDiffer>false</organismsDiffer>
    <experiments>3</experiments>
</comment>
<comment type="interaction">
    <interactant intactId="EBI-12000762">
        <id>Q7Z5V6-2</id>
    </interactant>
    <interactant intactId="EBI-12193763">
        <id>A1KXE4-2</id>
        <label>FAM168B</label>
    </interactant>
    <organismsDiffer>false</organismsDiffer>
    <experiments>3</experiments>
</comment>
<comment type="interaction">
    <interactant intactId="EBI-12000762">
        <id>Q7Z5V6-2</id>
    </interactant>
    <interactant intactId="EBI-701903">
        <id>Q14192</id>
        <label>FHL2</label>
    </interactant>
    <organismsDiffer>false</organismsDiffer>
    <experiments>3</experiments>
</comment>
<comment type="interaction">
    <interactant intactId="EBI-12000762">
        <id>Q7Z5V6-2</id>
    </interactant>
    <interactant intactId="EBI-741101">
        <id>Q13643</id>
        <label>FHL3</label>
    </interactant>
    <organismsDiffer>false</organismsDiffer>
    <experiments>3</experiments>
</comment>
<comment type="interaction">
    <interactant intactId="EBI-12000762">
        <id>Q7Z5V6-2</id>
    </interactant>
    <interactant intactId="EBI-750641">
        <id>Q5TD97</id>
        <label>FHL5</label>
    </interactant>
    <organismsDiffer>false</organismsDiffer>
    <experiments>3</experiments>
</comment>
<comment type="interaction">
    <interactant intactId="EBI-12000762">
        <id>Q7Z5V6-2</id>
    </interactant>
    <interactant intactId="EBI-744771">
        <id>O75344</id>
        <label>FKBP6</label>
    </interactant>
    <organismsDiffer>false</organismsDiffer>
    <experiments>6</experiments>
</comment>
<comment type="interaction">
    <interactant intactId="EBI-12000762">
        <id>Q7Z5V6-2</id>
    </interactant>
    <interactant intactId="EBI-725515">
        <id>O43559</id>
        <label>FRS3</label>
    </interactant>
    <organismsDiffer>false</organismsDiffer>
    <experiments>3</experiments>
</comment>
<comment type="interaction">
    <interactant intactId="EBI-12000762">
        <id>Q7Z5V6-2</id>
    </interactant>
    <interactant intactId="EBI-618309">
        <id>Q08379</id>
        <label>GOLGA2</label>
    </interactant>
    <organismsDiffer>false</organismsDiffer>
    <experiments>3</experiments>
</comment>
<comment type="interaction">
    <interactant intactId="EBI-12000762">
        <id>Q7Z5V6-2</id>
    </interactant>
    <interactant intactId="EBI-740220">
        <id>O14964</id>
        <label>HGS</label>
    </interactant>
    <organismsDiffer>false</organismsDiffer>
    <experiments>6</experiments>
</comment>
<comment type="interaction">
    <interactant intactId="EBI-12000762">
        <id>Q7Z5V6-2</id>
    </interactant>
    <interactant intactId="EBI-351590">
        <id>P31943</id>
        <label>HNRNPH1</label>
    </interactant>
    <organismsDiffer>false</organismsDiffer>
    <experiments>3</experiments>
</comment>
<comment type="interaction">
    <interactant intactId="EBI-12000762">
        <id>Q7Z5V6-2</id>
    </interactant>
    <interactant intactId="EBI-748420">
        <id>Q9NSC5</id>
        <label>HOMER3</label>
    </interactant>
    <organismsDiffer>false</organismsDiffer>
    <experiments>3</experiments>
</comment>
<comment type="interaction">
    <interactant intactId="EBI-12000762">
        <id>Q7Z5V6-2</id>
    </interactant>
    <interactant intactId="EBI-740785">
        <id>P49639</id>
        <label>HOXA1</label>
    </interactant>
    <organismsDiffer>false</organismsDiffer>
    <experiments>5</experiments>
</comment>
<comment type="interaction">
    <interactant intactId="EBI-12000762">
        <id>Q7Z5V6-2</id>
    </interactant>
    <interactant intactId="EBI-7116203">
        <id>O75031</id>
        <label>HSF2BP</label>
    </interactant>
    <organismsDiffer>false</organismsDiffer>
    <experiments>3</experiments>
</comment>
<comment type="interaction">
    <interactant intactId="EBI-12000762">
        <id>Q7Z5V6-2</id>
    </interactant>
    <interactant intactId="EBI-6509505">
        <id>Q0VD86</id>
        <label>INCA1</label>
    </interactant>
    <organismsDiffer>false</organismsDiffer>
    <experiments>3</experiments>
</comment>
<comment type="interaction">
    <interactant intactId="EBI-12000762">
        <id>Q7Z5V6-2</id>
    </interactant>
    <interactant intactId="EBI-4397613">
        <id>Q7L273</id>
        <label>KCTD9</label>
    </interactant>
    <organismsDiffer>false</organismsDiffer>
    <experiments>3</experiments>
</comment>
<comment type="interaction">
    <interactant intactId="EBI-12000762">
        <id>Q7Z5V6-2</id>
    </interactant>
    <interactant intactId="EBI-10981970">
        <id>Q5T749</id>
        <label>KPRP</label>
    </interactant>
    <organismsDiffer>false</organismsDiffer>
    <experiments>3</experiments>
</comment>
<comment type="interaction">
    <interactant intactId="EBI-12000762">
        <id>Q7Z5V6-2</id>
    </interactant>
    <interactant intactId="EBI-948001">
        <id>Q15323</id>
        <label>KRT31</label>
    </interactant>
    <organismsDiffer>false</organismsDiffer>
    <experiments>3</experiments>
</comment>
<comment type="interaction">
    <interactant intactId="EBI-12000762">
        <id>Q7Z5V6-2</id>
    </interactant>
    <interactant intactId="EBI-11953846">
        <id>Q52LG2</id>
        <label>KRTAP13-2</label>
    </interactant>
    <organismsDiffer>false</organismsDiffer>
    <experiments>3</experiments>
</comment>
<comment type="interaction">
    <interactant intactId="EBI-12000762">
        <id>Q7Z5V6-2</id>
    </interactant>
    <interactant intactId="EBI-1048945">
        <id>Q3LI72</id>
        <label>KRTAP19-5</label>
    </interactant>
    <organismsDiffer>false</organismsDiffer>
    <experiments>3</experiments>
</comment>
<comment type="interaction">
    <interactant intactId="EBI-12000762">
        <id>Q7Z5V6-2</id>
    </interactant>
    <interactant intactId="EBI-12805508">
        <id>Q3LI70</id>
        <label>KRTAP19-6</label>
    </interactant>
    <organismsDiffer>false</organismsDiffer>
    <experiments>3</experiments>
</comment>
<comment type="interaction">
    <interactant intactId="EBI-12000762">
        <id>Q7Z5V6-2</id>
    </interactant>
    <interactant intactId="EBI-9996449">
        <id>Q9BYR8</id>
        <label>KRTAP3-1</label>
    </interactant>
    <organismsDiffer>false</organismsDiffer>
    <experiments>3</experiments>
</comment>
<comment type="interaction">
    <interactant intactId="EBI-12000762">
        <id>Q7Z5V6-2</id>
    </interactant>
    <interactant intactId="EBI-751260">
        <id>Q9BYR7</id>
        <label>KRTAP3-2</label>
    </interactant>
    <organismsDiffer>false</organismsDiffer>
    <experiments>3</experiments>
</comment>
<comment type="interaction">
    <interactant intactId="EBI-12000762">
        <id>Q7Z5V6-2</id>
    </interactant>
    <interactant intactId="EBI-11962084">
        <id>Q3LI66</id>
        <label>KRTAP6-2</label>
    </interactant>
    <organismsDiffer>false</organismsDiffer>
    <experiments>5</experiments>
</comment>
<comment type="interaction">
    <interactant intactId="EBI-12000762">
        <id>Q7Z5V6-2</id>
    </interactant>
    <interactant intactId="EBI-22311199">
        <id>Q3LI67</id>
        <label>KRTAP6-3</label>
    </interactant>
    <organismsDiffer>false</organismsDiffer>
    <experiments>3</experiments>
</comment>
<comment type="interaction">
    <interactant intactId="EBI-12000762">
        <id>Q7Z5V6-2</id>
    </interactant>
    <interactant intactId="EBI-10261141">
        <id>Q8IUC2</id>
        <label>KRTAP8-1</label>
    </interactant>
    <organismsDiffer>false</organismsDiffer>
    <experiments>3</experiments>
</comment>
<comment type="interaction">
    <interactant intactId="EBI-12000762">
        <id>Q7Z5V6-2</id>
    </interactant>
    <interactant intactId="EBI-9088686">
        <id>Q14847-2</id>
        <label>LASP1</label>
    </interactant>
    <organismsDiffer>false</organismsDiffer>
    <experiments>3</experiments>
</comment>
<comment type="interaction">
    <interactant intactId="EBI-12000762">
        <id>Q7Z5V6-2</id>
    </interactant>
    <interactant intactId="EBI-11959475">
        <id>P25791-3</id>
        <label>LMO2</label>
    </interactant>
    <organismsDiffer>false</organismsDiffer>
    <experiments>3</experiments>
</comment>
<comment type="interaction">
    <interactant intactId="EBI-12000762">
        <id>Q7Z5V6-2</id>
    </interactant>
    <interactant intactId="EBI-2798728">
        <id>P61968</id>
        <label>LMO4</label>
    </interactant>
    <organismsDiffer>false</organismsDiffer>
    <experiments>3</experiments>
</comment>
<comment type="interaction">
    <interactant intactId="EBI-12000762">
        <id>Q7Z5V6-2</id>
    </interactant>
    <interactant intactId="EBI-8487781">
        <id>Q8N6F8</id>
        <label>METTL27</label>
    </interactant>
    <organismsDiffer>false</organismsDiffer>
    <experiments>3</experiments>
</comment>
<comment type="interaction">
    <interactant intactId="EBI-12000762">
        <id>Q7Z5V6-2</id>
    </interactant>
    <interactant intactId="EBI-7950783">
        <id>Q96JP2</id>
        <label>MYO15B</label>
    </interactant>
    <organismsDiffer>false</organismsDiffer>
    <experiments>3</experiments>
</comment>
<comment type="interaction">
    <interactant intactId="EBI-12000762">
        <id>Q7Z5V6-2</id>
    </interactant>
    <interactant intactId="EBI-536879">
        <id>O43482</id>
        <label>OIP5</label>
    </interactant>
    <organismsDiffer>false</organismsDiffer>
    <experiments>3</experiments>
</comment>
<comment type="interaction">
    <interactant intactId="EBI-12000762">
        <id>Q7Z5V6-2</id>
    </interactant>
    <interactant intactId="EBI-527784">
        <id>Q6GQQ9</id>
        <label>OTUD7B</label>
    </interactant>
    <organismsDiffer>false</organismsDiffer>
    <experiments>3</experiments>
</comment>
<comment type="interaction">
    <interactant intactId="EBI-12000762">
        <id>Q7Z5V6-2</id>
    </interactant>
    <interactant intactId="EBI-357275">
        <id>Q99471</id>
        <label>PFDN5</label>
    </interactant>
    <organismsDiffer>false</organismsDiffer>
    <experiments>3</experiments>
</comment>
<comment type="interaction">
    <interactant intactId="EBI-12000762">
        <id>Q7Z5V6-2</id>
    </interactant>
    <interactant intactId="EBI-726466">
        <id>O15496</id>
        <label>PLA2G10</label>
    </interactant>
    <organismsDiffer>false</organismsDiffer>
    <experiments>3</experiments>
</comment>
<comment type="interaction">
    <interactant intactId="EBI-12000762">
        <id>Q7Z5V6-2</id>
    </interactant>
    <interactant intactId="EBI-949255">
        <id>Q58EX7</id>
        <label>PLEKHG4</label>
    </interactant>
    <organismsDiffer>false</organismsDiffer>
    <experiments>3</experiments>
</comment>
<comment type="interaction">
    <interactant intactId="EBI-12000762">
        <id>Q7Z5V6-2</id>
    </interactant>
    <interactant intactId="EBI-12014286">
        <id>Q494U1-3</id>
        <label>PLEKHN1</label>
    </interactant>
    <organismsDiffer>false</organismsDiffer>
    <experiments>3</experiments>
</comment>
<comment type="interaction">
    <interactant intactId="EBI-12000762">
        <id>Q7Z5V6-2</id>
    </interactant>
    <interactant intactId="EBI-356283">
        <id>P36873</id>
        <label>PPP1CC</label>
    </interactant>
    <organismsDiffer>false</organismsDiffer>
    <experiments>3</experiments>
</comment>
<comment type="interaction">
    <interactant intactId="EBI-12000762">
        <id>Q7Z5V6-2</id>
    </interactant>
    <interactant intactId="EBI-3957793">
        <id>Q9GZV8</id>
        <label>PRDM14</label>
    </interactant>
    <organismsDiffer>false</organismsDiffer>
    <experiments>3</experiments>
</comment>
<comment type="interaction">
    <interactant intactId="EBI-12000762">
        <id>Q7Z5V6-2</id>
    </interactant>
    <interactant intactId="EBI-1383852">
        <id>P54646</id>
        <label>PRKAA2</label>
    </interactant>
    <organismsDiffer>false</organismsDiffer>
    <experiments>3</experiments>
</comment>
<comment type="interaction">
    <interactant intactId="EBI-12000762">
        <id>Q7Z5V6-2</id>
    </interactant>
    <interactant intactId="EBI-347462">
        <id>P47897</id>
        <label>QARS1</label>
    </interactant>
    <organismsDiffer>false</organismsDiffer>
    <experiments>3</experiments>
</comment>
<comment type="interaction">
    <interactant intactId="EBI-12000762">
        <id>Q7Z5V6-2</id>
    </interactant>
    <interactant intactId="EBI-741332">
        <id>P57052</id>
        <label>RBM11</label>
    </interactant>
    <organismsDiffer>false</organismsDiffer>
    <experiments>3</experiments>
</comment>
<comment type="interaction">
    <interactant intactId="EBI-12000762">
        <id>Q7Z5V6-2</id>
    </interactant>
    <interactant intactId="EBI-746118">
        <id>Q8HWS3</id>
        <label>RFX6</label>
    </interactant>
    <organismsDiffer>false</organismsDiffer>
    <experiments>3</experiments>
</comment>
<comment type="interaction">
    <interactant intactId="EBI-12000762">
        <id>Q7Z5V6-2</id>
    </interactant>
    <interactant intactId="EBI-10182375">
        <id>Q9UFD9</id>
        <label>RIMBP3</label>
    </interactant>
    <organismsDiffer>false</organismsDiffer>
    <experiments>3</experiments>
</comment>
<comment type="interaction">
    <interactant intactId="EBI-12000762">
        <id>Q7Z5V6-2</id>
    </interactant>
    <interactant intactId="EBI-10269374">
        <id>Q8ND83</id>
        <label>SLAIN1</label>
    </interactant>
    <organismsDiffer>false</organismsDiffer>
    <experiments>3</experiments>
</comment>
<comment type="interaction">
    <interactant intactId="EBI-12000762">
        <id>Q7Z5V6-2</id>
    </interactant>
    <interactant intactId="EBI-750487">
        <id>Q8WW24</id>
        <label>TEKT4</label>
    </interactant>
    <organismsDiffer>false</organismsDiffer>
    <experiments>6</experiments>
</comment>
<comment type="interaction">
    <interactant intactId="EBI-12000762">
        <id>Q7Z5V6-2</id>
    </interactant>
    <interactant intactId="EBI-357061">
        <id>Q92734</id>
        <label>TFG</label>
    </interactant>
    <organismsDiffer>false</organismsDiffer>
    <experiments>3</experiments>
</comment>
<comment type="interaction">
    <interactant intactId="EBI-12000762">
        <id>Q7Z5V6-2</id>
    </interactant>
    <interactant intactId="EBI-12029034">
        <id>Q96PF1</id>
        <label>TGM7</label>
    </interactant>
    <organismsDiffer>false</organismsDiffer>
    <experiments>3</experiments>
</comment>
<comment type="interaction">
    <interactant intactId="EBI-12000762">
        <id>Q7Z5V6-2</id>
    </interactant>
    <interactant intactId="EBI-359224">
        <id>Q13077</id>
        <label>TRAF1</label>
    </interactant>
    <organismsDiffer>false</organismsDiffer>
    <experiments>3</experiments>
</comment>
<comment type="interaction">
    <interactant intactId="EBI-12000762">
        <id>Q7Z5V6-2</id>
    </interactant>
    <interactant intactId="EBI-355744">
        <id>Q12933</id>
        <label>TRAF2</label>
    </interactant>
    <organismsDiffer>false</organismsDiffer>
    <experiments>3</experiments>
</comment>
<comment type="interaction">
    <interactant intactId="EBI-12000762">
        <id>Q7Z5V6-2</id>
    </interactant>
    <interactant intactId="EBI-492476">
        <id>Q96RU7</id>
        <label>TRIB3</label>
    </interactant>
    <organismsDiffer>false</organismsDiffer>
    <experiments>3</experiments>
</comment>
<comment type="interaction">
    <interactant intactId="EBI-12000762">
        <id>Q7Z5V6-2</id>
    </interactant>
    <interactant intactId="EBI-12806590">
        <id>Q86WV8</id>
        <label>TSC1</label>
    </interactant>
    <organismsDiffer>false</organismsDiffer>
    <experiments>3</experiments>
</comment>
<comment type="interaction">
    <interactant intactId="EBI-12000762">
        <id>Q7Z5V6-2</id>
    </interactant>
    <interactant intactId="EBI-12817837">
        <id>Q9H9P5-5</id>
        <label>UNKL</label>
    </interactant>
    <organismsDiffer>false</organismsDiffer>
    <experiments>3</experiments>
</comment>
<comment type="interaction">
    <interactant intactId="EBI-12000762">
        <id>Q7Z5V6-2</id>
    </interactant>
    <interactant intactId="EBI-2803134">
        <id>Q2NL98</id>
        <label>VMAC</label>
    </interactant>
    <organismsDiffer>false</organismsDiffer>
    <experiments>3</experiments>
</comment>
<comment type="interaction">
    <interactant intactId="EBI-12000762">
        <id>Q7Z5V6-2</id>
    </interactant>
    <interactant intactId="EBI-12040603">
        <id>Q9NZC7-5</id>
        <label>WWOX</label>
    </interactant>
    <organismsDiffer>false</organismsDiffer>
    <experiments>3</experiments>
</comment>
<comment type="interaction">
    <interactant intactId="EBI-12000762">
        <id>Q7Z5V6-2</id>
    </interactant>
    <interactant intactId="EBI-12030590">
        <id>Q9H0C1</id>
        <label>ZMYND12</label>
    </interactant>
    <organismsDiffer>false</organismsDiffer>
    <experiments>3</experiments>
</comment>
<comment type="subcellular location">
    <subcellularLocation>
        <location evidence="2">Cell projection</location>
        <location evidence="2">Cilium</location>
    </subcellularLocation>
    <subcellularLocation>
        <location evidence="2">Cytoplasm</location>
    </subcellularLocation>
    <subcellularLocation>
        <location evidence="1">Cytoplasm</location>
        <location evidence="1">Cytoskeleton</location>
        <location evidence="1">Flagellum axoneme</location>
    </subcellularLocation>
    <text evidence="2">Localized to the cilia of polarized ependymal cells during development and at the adult stage. Preferentially locates between the peripheral microtubules of the axoneme and the ciliary membrane.</text>
</comment>
<comment type="alternative products">
    <event type="alternative splicing"/>
    <isoform>
        <id>Q7Z5V6-1</id>
        <name>1</name>
        <sequence type="displayed"/>
    </isoform>
    <isoform>
        <id>Q7Z5V6-2</id>
        <name>2</name>
        <sequence type="described" ref="VSP_022731"/>
    </isoform>
</comment>
<keyword id="KW-0025">Alternative splicing</keyword>
<keyword id="KW-0966">Cell projection</keyword>
<keyword id="KW-0969">Cilium</keyword>
<keyword id="KW-0963">Cytoplasm</keyword>
<keyword id="KW-0206">Cytoskeleton</keyword>
<keyword id="KW-0282">Flagellum</keyword>
<keyword id="KW-1267">Proteomics identification</keyword>
<keyword id="KW-1185">Reference proteome</keyword>